<dbReference type="EC" id="7.1.1.-" evidence="1"/>
<dbReference type="EMBL" id="CP000656">
    <property type="protein sequence ID" value="ABP46953.1"/>
    <property type="molecule type" value="Genomic_DNA"/>
</dbReference>
<dbReference type="SMR" id="A4TDA8"/>
<dbReference type="STRING" id="350054.Mflv_4484"/>
<dbReference type="KEGG" id="mgi:Mflv_4484"/>
<dbReference type="eggNOG" id="COG0649">
    <property type="taxonomic scope" value="Bacteria"/>
</dbReference>
<dbReference type="HOGENOM" id="CLU_015134_1_2_11"/>
<dbReference type="OrthoDB" id="9801496at2"/>
<dbReference type="GO" id="GO:0005886">
    <property type="term" value="C:plasma membrane"/>
    <property type="evidence" value="ECO:0007669"/>
    <property type="project" value="UniProtKB-SubCell"/>
</dbReference>
<dbReference type="GO" id="GO:0051287">
    <property type="term" value="F:NAD binding"/>
    <property type="evidence" value="ECO:0007669"/>
    <property type="project" value="InterPro"/>
</dbReference>
<dbReference type="GO" id="GO:0050136">
    <property type="term" value="F:NADH:ubiquinone reductase (non-electrogenic) activity"/>
    <property type="evidence" value="ECO:0007669"/>
    <property type="project" value="UniProtKB-UniRule"/>
</dbReference>
<dbReference type="GO" id="GO:0048038">
    <property type="term" value="F:quinone binding"/>
    <property type="evidence" value="ECO:0007669"/>
    <property type="project" value="UniProtKB-KW"/>
</dbReference>
<dbReference type="Gene3D" id="1.10.645.10">
    <property type="entry name" value="Cytochrome-c3 Hydrogenase, chain B"/>
    <property type="match status" value="1"/>
</dbReference>
<dbReference type="HAMAP" id="MF_01358">
    <property type="entry name" value="NDH1_NuoD"/>
    <property type="match status" value="1"/>
</dbReference>
<dbReference type="InterPro" id="IPR001135">
    <property type="entry name" value="NADH_Q_OxRdtase_suD"/>
</dbReference>
<dbReference type="InterPro" id="IPR014029">
    <property type="entry name" value="NADH_UbQ_OxRdtase_49kDa_CS"/>
</dbReference>
<dbReference type="InterPro" id="IPR022885">
    <property type="entry name" value="NDH1_su_D/H"/>
</dbReference>
<dbReference type="InterPro" id="IPR029014">
    <property type="entry name" value="NiFe-Hase_large"/>
</dbReference>
<dbReference type="NCBIfam" id="TIGR01962">
    <property type="entry name" value="NuoD"/>
    <property type="match status" value="1"/>
</dbReference>
<dbReference type="NCBIfam" id="NF004739">
    <property type="entry name" value="PRK06075.1"/>
    <property type="match status" value="1"/>
</dbReference>
<dbReference type="PANTHER" id="PTHR11993:SF10">
    <property type="entry name" value="NADH DEHYDROGENASE [UBIQUINONE] IRON-SULFUR PROTEIN 2, MITOCHONDRIAL"/>
    <property type="match status" value="1"/>
</dbReference>
<dbReference type="PANTHER" id="PTHR11993">
    <property type="entry name" value="NADH-UBIQUINONE OXIDOREDUCTASE 49 KDA SUBUNIT"/>
    <property type="match status" value="1"/>
</dbReference>
<dbReference type="Pfam" id="PF00346">
    <property type="entry name" value="Complex1_49kDa"/>
    <property type="match status" value="1"/>
</dbReference>
<dbReference type="SUPFAM" id="SSF56762">
    <property type="entry name" value="HydB/Nqo4-like"/>
    <property type="match status" value="1"/>
</dbReference>
<dbReference type="PROSITE" id="PS00535">
    <property type="entry name" value="COMPLEX1_49K"/>
    <property type="match status" value="1"/>
</dbReference>
<sequence length="451" mass="49794">MTTSAQRPERVIVVGGQDWDQVVTAARQMSNSSSRAGDAAEHAGERIVVNMGPQHPSTHGVLRLILEIEGETIVEARCGIGYLHTGIEKNLEFRTWTQGVTFVTRMDYLSPFFNETAYCLGVEKLLGVTDDIPERASVIRVMMMELNRISSHLVALATGGMELGAMTAMFLGFRERELILSVFETITGLRMNSAYIRPGGVAADLPEEGLPQIRELLTLLPTRLRDMENLLNENYIWKARTLGVGYLDLTGCMALGITGPVLRSTGLPHDLRKSQPYCGYQTYDFDVITDDRCDSYGRYLIRVKEMRESLRIVEQCVERLERSTGEPVMITDRKLAWPADLKVGPDGLGNSPEHIAKIMGHSMEGLIHHFKLVTEGIRVPPGQVYVAVESPRGELGVHMVSDGGTRPYRVHYRDPSFTNLQAVAAMCEGGMVADAITAVASIDPVMGGVDR</sequence>
<keyword id="KW-1003">Cell membrane</keyword>
<keyword id="KW-0472">Membrane</keyword>
<keyword id="KW-0520">NAD</keyword>
<keyword id="KW-0874">Quinone</keyword>
<keyword id="KW-1278">Translocase</keyword>
<keyword id="KW-0813">Transport</keyword>
<name>NUOD_MYCGI</name>
<comment type="function">
    <text evidence="1">NDH-1 shuttles electrons from NADH, via FMN and iron-sulfur (Fe-S) centers, to quinones in the respiratory chain. The immediate electron acceptor for the enzyme in this species is believed to be a menaquinone. Couples the redox reaction to proton translocation (for every two electrons transferred, four hydrogen ions are translocated across the cytoplasmic membrane), and thus conserves the redox energy in a proton gradient.</text>
</comment>
<comment type="catalytic activity">
    <reaction evidence="1">
        <text>a quinone + NADH + 5 H(+)(in) = a quinol + NAD(+) + 4 H(+)(out)</text>
        <dbReference type="Rhea" id="RHEA:57888"/>
        <dbReference type="ChEBI" id="CHEBI:15378"/>
        <dbReference type="ChEBI" id="CHEBI:24646"/>
        <dbReference type="ChEBI" id="CHEBI:57540"/>
        <dbReference type="ChEBI" id="CHEBI:57945"/>
        <dbReference type="ChEBI" id="CHEBI:132124"/>
    </reaction>
</comment>
<comment type="subunit">
    <text evidence="1">NDH-1 is composed of 14 different subunits. Subunits NuoB, C, D, E, F, and G constitute the peripheral sector of the complex.</text>
</comment>
<comment type="subcellular location">
    <subcellularLocation>
        <location evidence="1">Cell membrane</location>
        <topology evidence="1">Peripheral membrane protein</topology>
        <orientation evidence="1">Cytoplasmic side</orientation>
    </subcellularLocation>
</comment>
<comment type="similarity">
    <text evidence="1">Belongs to the complex I 49 kDa subunit family.</text>
</comment>
<accession>A4TDA8</accession>
<proteinExistence type="inferred from homology"/>
<organism>
    <name type="scientific">Mycolicibacterium gilvum (strain PYR-GCK)</name>
    <name type="common">Mycobacterium gilvum (strain PYR-GCK)</name>
    <dbReference type="NCBI Taxonomy" id="350054"/>
    <lineage>
        <taxon>Bacteria</taxon>
        <taxon>Bacillati</taxon>
        <taxon>Actinomycetota</taxon>
        <taxon>Actinomycetes</taxon>
        <taxon>Mycobacteriales</taxon>
        <taxon>Mycobacteriaceae</taxon>
        <taxon>Mycolicibacterium</taxon>
    </lineage>
</organism>
<evidence type="ECO:0000255" key="1">
    <source>
        <dbReference type="HAMAP-Rule" id="MF_01358"/>
    </source>
</evidence>
<gene>
    <name evidence="1" type="primary">nuoD</name>
    <name type="ordered locus">Mflv_4484</name>
</gene>
<feature type="chain" id="PRO_0000357855" description="NADH-quinone oxidoreductase subunit D">
    <location>
        <begin position="1"/>
        <end position="451"/>
    </location>
</feature>
<reference key="1">
    <citation type="submission" date="2007-04" db="EMBL/GenBank/DDBJ databases">
        <title>Complete sequence of chromosome of Mycobacterium gilvum PYR-GCK.</title>
        <authorList>
            <consortium name="US DOE Joint Genome Institute"/>
            <person name="Copeland A."/>
            <person name="Lucas S."/>
            <person name="Lapidus A."/>
            <person name="Barry K."/>
            <person name="Detter J.C."/>
            <person name="Glavina del Rio T."/>
            <person name="Hammon N."/>
            <person name="Israni S."/>
            <person name="Dalin E."/>
            <person name="Tice H."/>
            <person name="Pitluck S."/>
            <person name="Chain P."/>
            <person name="Malfatti S."/>
            <person name="Shin M."/>
            <person name="Vergez L."/>
            <person name="Schmutz J."/>
            <person name="Larimer F."/>
            <person name="Land M."/>
            <person name="Hauser L."/>
            <person name="Kyrpides N."/>
            <person name="Mikhailova N."/>
            <person name="Miller C."/>
            <person name="Richardson P."/>
        </authorList>
    </citation>
    <scope>NUCLEOTIDE SEQUENCE [LARGE SCALE GENOMIC DNA]</scope>
    <source>
        <strain>PYR-GCK</strain>
    </source>
</reference>
<protein>
    <recommendedName>
        <fullName evidence="1">NADH-quinone oxidoreductase subunit D</fullName>
        <ecNumber evidence="1">7.1.1.-</ecNumber>
    </recommendedName>
    <alternativeName>
        <fullName evidence="1">NADH dehydrogenase I subunit D</fullName>
    </alternativeName>
    <alternativeName>
        <fullName evidence="1">NDH-1 subunit D</fullName>
    </alternativeName>
</protein>